<name>YIF8_YEAST</name>
<organism>
    <name type="scientific">Saccharomyces cerevisiae (strain ATCC 204508 / S288c)</name>
    <name type="common">Baker's yeast</name>
    <dbReference type="NCBI Taxonomy" id="559292"/>
    <lineage>
        <taxon>Eukaryota</taxon>
        <taxon>Fungi</taxon>
        <taxon>Dikarya</taxon>
        <taxon>Ascomycota</taxon>
        <taxon>Saccharomycotina</taxon>
        <taxon>Saccharomycetes</taxon>
        <taxon>Saccharomycetales</taxon>
        <taxon>Saccharomycetaceae</taxon>
        <taxon>Saccharomyces</taxon>
    </lineage>
</organism>
<sequence length="94" mass="10333">MMDGHVQGLRKPLIPMSHVVGCNLLLYIRLGCREIYVGCVHYQGGFTNVIFYFKCSNEGCIISLAVFPAILPAAYNSHGERIVACCGCNMTVAY</sequence>
<dbReference type="EMBL" id="Z38060">
    <property type="protein sequence ID" value="CAA86165.1"/>
    <property type="molecule type" value="Genomic_DNA"/>
</dbReference>
<dbReference type="EMBL" id="AY222079">
    <property type="protein sequence ID" value="AAP06932.1"/>
    <property type="status" value="ALT_SEQ"/>
    <property type="molecule type" value="Genomic_DNA"/>
</dbReference>
<dbReference type="PIR" id="S48421">
    <property type="entry name" value="S48421"/>
</dbReference>
<dbReference type="PaxDb" id="4932-YIL058W"/>
<dbReference type="EnsemblFungi" id="YIL058W_mRNA">
    <property type="protein sequence ID" value="YIL058W"/>
    <property type="gene ID" value="YIL058W"/>
</dbReference>
<dbReference type="AGR" id="SGD:S000001320"/>
<dbReference type="SGD" id="S000001320">
    <property type="gene designation" value="YIL058W"/>
</dbReference>
<dbReference type="HOGENOM" id="CLU_2387871_0_0_1"/>
<proteinExistence type="uncertain"/>
<accession>P40521</accession>
<accession>Q870I2</accession>
<evidence type="ECO:0000269" key="1">
    <source>
    </source>
</evidence>
<evidence type="ECO:0000305" key="2"/>
<evidence type="ECO:0000305" key="3">
    <source>
    </source>
</evidence>
<comment type="caution">
    <text evidence="3">Product of a dubious gene prediction unlikely to encode a functional protein. Because of that it is not part of the S.cerevisiae S288c complete/reference proteome set.</text>
</comment>
<comment type="sequence caution" evidence="2">
    <conflict type="erroneous termination">
        <sequence resource="EMBL-CDS" id="AAP06932"/>
    </conflict>
    <text>Truncated C-terminus.</text>
</comment>
<gene>
    <name type="ordered locus">YIL058W</name>
</gene>
<feature type="chain" id="PRO_0000202986" description="Putative uncharacterized protein YIL058W">
    <location>
        <begin position="1"/>
        <end position="94"/>
    </location>
</feature>
<feature type="sequence variant" description="In strain: CEN.PK 113-7D." evidence="1">
    <original>Q</original>
    <variation>H</variation>
    <location>
        <position position="7"/>
    </location>
</feature>
<feature type="sequence variant" description="In strain: CEN.PK 113-7D." evidence="1">
    <original>V</original>
    <variation>A</variation>
    <location>
        <position position="40"/>
    </location>
</feature>
<feature type="sequence variant" description="In strain: CEN.PK 113-7D." evidence="1">
    <original>V</original>
    <variation>L</variation>
    <location>
        <position position="49"/>
    </location>
</feature>
<feature type="sequence variant" description="In strain: CEN.PK 113-7D." evidence="1">
    <original>IL</original>
    <variation>VF</variation>
    <location>
        <begin position="70"/>
        <end position="71"/>
    </location>
</feature>
<protein>
    <recommendedName>
        <fullName>Putative uncharacterized protein YIL058W</fullName>
    </recommendedName>
</protein>
<reference key="1">
    <citation type="journal article" date="1997" name="Nature">
        <title>The nucleotide sequence of Saccharomyces cerevisiae chromosome IX.</title>
        <authorList>
            <person name="Churcher C.M."/>
            <person name="Bowman S."/>
            <person name="Badcock K."/>
            <person name="Bankier A.T."/>
            <person name="Brown D."/>
            <person name="Chillingworth T."/>
            <person name="Connor R."/>
            <person name="Devlin K."/>
            <person name="Gentles S."/>
            <person name="Hamlin N."/>
            <person name="Harris D.E."/>
            <person name="Horsnell T."/>
            <person name="Hunt S."/>
            <person name="Jagels K."/>
            <person name="Jones M."/>
            <person name="Lye G."/>
            <person name="Moule S."/>
            <person name="Odell C."/>
            <person name="Pearson D."/>
            <person name="Rajandream M.A."/>
            <person name="Rice P."/>
            <person name="Rowley N."/>
            <person name="Skelton J."/>
            <person name="Smith V."/>
            <person name="Walsh S.V."/>
            <person name="Whitehead S."/>
            <person name="Barrell B.G."/>
        </authorList>
    </citation>
    <scope>NUCLEOTIDE SEQUENCE [LARGE SCALE GENOMIC DNA]</scope>
    <source>
        <strain>ATCC 204508 / S288c</strain>
    </source>
</reference>
<reference key="2">
    <citation type="journal article" date="2014" name="G3 (Bethesda)">
        <title>The reference genome sequence of Saccharomyces cerevisiae: Then and now.</title>
        <authorList>
            <person name="Engel S.R."/>
            <person name="Dietrich F.S."/>
            <person name="Fisk D.G."/>
            <person name="Binkley G."/>
            <person name="Balakrishnan R."/>
            <person name="Costanzo M.C."/>
            <person name="Dwight S.S."/>
            <person name="Hitz B.C."/>
            <person name="Karra K."/>
            <person name="Nash R.S."/>
            <person name="Weng S."/>
            <person name="Wong E.D."/>
            <person name="Lloyd P."/>
            <person name="Skrzypek M.S."/>
            <person name="Miyasato S.R."/>
            <person name="Simison M."/>
            <person name="Cherry J.M."/>
        </authorList>
    </citation>
    <scope>GENOME REANNOTATION</scope>
    <source>
        <strain>ATCC 204508 / S288c</strain>
    </source>
</reference>
<reference key="3">
    <citation type="journal article" date="2003" name="FEMS Yeast Res.">
        <title>Comparative genotyping of the Saccharomyces cerevisiae laboratory strains S288C and CEN.PK113-7D using oligonucleotide microarrays.</title>
        <authorList>
            <person name="Daran-Lapujade P."/>
            <person name="Daran J.-M."/>
            <person name="Koetter P."/>
            <person name="Petit T."/>
            <person name="Piper M.D.W."/>
            <person name="Pronk J.T."/>
        </authorList>
    </citation>
    <scope>NUCLEOTIDE SEQUENCE [GENOMIC DNA]</scope>
    <scope>VARIANTS HIS-7; ALA-40; LEU-49 AND 70-ILE-LEU-71 DELINS VAL-PHE</scope>
    <source>
        <strain>CEN.PK 113-7D</strain>
    </source>
</reference>